<protein>
    <recommendedName>
        <fullName evidence="1">Small ribosomal subunit protein uS8</fullName>
    </recommendedName>
    <alternativeName>
        <fullName evidence="2">30S ribosomal protein S8</fullName>
    </alternativeName>
</protein>
<name>RS8_RICAH</name>
<accession>A8GPD6</accession>
<dbReference type="EMBL" id="CP000847">
    <property type="protein sequence ID" value="ABV75261.1"/>
    <property type="molecule type" value="Genomic_DNA"/>
</dbReference>
<dbReference type="RefSeq" id="WP_012149891.1">
    <property type="nucleotide sequence ID" value="NC_009881.1"/>
</dbReference>
<dbReference type="SMR" id="A8GPD6"/>
<dbReference type="STRING" id="293614.A1C_05035"/>
<dbReference type="KEGG" id="rak:A1C_05035"/>
<dbReference type="eggNOG" id="COG0096">
    <property type="taxonomic scope" value="Bacteria"/>
</dbReference>
<dbReference type="HOGENOM" id="CLU_098428_0_0_5"/>
<dbReference type="Proteomes" id="UP000006830">
    <property type="component" value="Chromosome"/>
</dbReference>
<dbReference type="GO" id="GO:1990904">
    <property type="term" value="C:ribonucleoprotein complex"/>
    <property type="evidence" value="ECO:0007669"/>
    <property type="project" value="UniProtKB-KW"/>
</dbReference>
<dbReference type="GO" id="GO:0005840">
    <property type="term" value="C:ribosome"/>
    <property type="evidence" value="ECO:0007669"/>
    <property type="project" value="UniProtKB-KW"/>
</dbReference>
<dbReference type="GO" id="GO:0019843">
    <property type="term" value="F:rRNA binding"/>
    <property type="evidence" value="ECO:0007669"/>
    <property type="project" value="UniProtKB-UniRule"/>
</dbReference>
<dbReference type="GO" id="GO:0003735">
    <property type="term" value="F:structural constituent of ribosome"/>
    <property type="evidence" value="ECO:0007669"/>
    <property type="project" value="InterPro"/>
</dbReference>
<dbReference type="GO" id="GO:0006412">
    <property type="term" value="P:translation"/>
    <property type="evidence" value="ECO:0007669"/>
    <property type="project" value="UniProtKB-UniRule"/>
</dbReference>
<dbReference type="FunFam" id="3.30.1370.30:FF:000002">
    <property type="entry name" value="30S ribosomal protein S8"/>
    <property type="match status" value="1"/>
</dbReference>
<dbReference type="FunFam" id="3.30.1490.10:FF:000001">
    <property type="entry name" value="30S ribosomal protein S8"/>
    <property type="match status" value="1"/>
</dbReference>
<dbReference type="Gene3D" id="3.30.1370.30">
    <property type="match status" value="1"/>
</dbReference>
<dbReference type="Gene3D" id="3.30.1490.10">
    <property type="match status" value="1"/>
</dbReference>
<dbReference type="HAMAP" id="MF_01302_B">
    <property type="entry name" value="Ribosomal_uS8_B"/>
    <property type="match status" value="1"/>
</dbReference>
<dbReference type="InterPro" id="IPR000630">
    <property type="entry name" value="Ribosomal_uS8"/>
</dbReference>
<dbReference type="InterPro" id="IPR047863">
    <property type="entry name" value="Ribosomal_uS8_CS"/>
</dbReference>
<dbReference type="InterPro" id="IPR035987">
    <property type="entry name" value="Ribosomal_uS8_sf"/>
</dbReference>
<dbReference type="NCBIfam" id="NF001109">
    <property type="entry name" value="PRK00136.1"/>
    <property type="match status" value="1"/>
</dbReference>
<dbReference type="PANTHER" id="PTHR11758">
    <property type="entry name" value="40S RIBOSOMAL PROTEIN S15A"/>
    <property type="match status" value="1"/>
</dbReference>
<dbReference type="Pfam" id="PF00410">
    <property type="entry name" value="Ribosomal_S8"/>
    <property type="match status" value="1"/>
</dbReference>
<dbReference type="SUPFAM" id="SSF56047">
    <property type="entry name" value="Ribosomal protein S8"/>
    <property type="match status" value="1"/>
</dbReference>
<dbReference type="PROSITE" id="PS00053">
    <property type="entry name" value="RIBOSOMAL_S8"/>
    <property type="match status" value="1"/>
</dbReference>
<sequence length="132" mass="14783">MSMTDNVADMLTRIRNAYKSKLINVSFPSSKIKTSILDVLQKEGYIKDYVTTQKNNISYAEVALKYSVNGDASICEIHRVSKPGKRVYSAIKALKGYYNNMGIYILSTPYGVMSDREAHIKNVGGEVICKVF</sequence>
<reference key="1">
    <citation type="submission" date="2007-09" db="EMBL/GenBank/DDBJ databases">
        <title>Complete genome sequence of Rickettsia akari.</title>
        <authorList>
            <person name="Madan A."/>
            <person name="Fahey J."/>
            <person name="Helton E."/>
            <person name="Ketteman M."/>
            <person name="Madan A."/>
            <person name="Rodrigues S."/>
            <person name="Sanchez A."/>
            <person name="Whiting M."/>
            <person name="Dasch G."/>
            <person name="Eremeeva M."/>
        </authorList>
    </citation>
    <scope>NUCLEOTIDE SEQUENCE [LARGE SCALE GENOMIC DNA]</scope>
    <source>
        <strain>Hartford</strain>
    </source>
</reference>
<organism>
    <name type="scientific">Rickettsia akari (strain Hartford)</name>
    <dbReference type="NCBI Taxonomy" id="293614"/>
    <lineage>
        <taxon>Bacteria</taxon>
        <taxon>Pseudomonadati</taxon>
        <taxon>Pseudomonadota</taxon>
        <taxon>Alphaproteobacteria</taxon>
        <taxon>Rickettsiales</taxon>
        <taxon>Rickettsiaceae</taxon>
        <taxon>Rickettsieae</taxon>
        <taxon>Rickettsia</taxon>
        <taxon>spotted fever group</taxon>
    </lineage>
</organism>
<proteinExistence type="inferred from homology"/>
<comment type="function">
    <text evidence="1">One of the primary rRNA binding proteins, it binds directly to 16S rRNA central domain where it helps coordinate assembly of the platform of the 30S subunit.</text>
</comment>
<comment type="subunit">
    <text evidence="1">Part of the 30S ribosomal subunit. Contacts proteins S5 and S12.</text>
</comment>
<comment type="similarity">
    <text evidence="1">Belongs to the universal ribosomal protein uS8 family.</text>
</comment>
<gene>
    <name evidence="1" type="primary">rpsH</name>
    <name type="ordered locus">A1C_05035</name>
</gene>
<feature type="chain" id="PRO_1000051793" description="Small ribosomal subunit protein uS8">
    <location>
        <begin position="1"/>
        <end position="132"/>
    </location>
</feature>
<keyword id="KW-0687">Ribonucleoprotein</keyword>
<keyword id="KW-0689">Ribosomal protein</keyword>
<keyword id="KW-0694">RNA-binding</keyword>
<keyword id="KW-0699">rRNA-binding</keyword>
<evidence type="ECO:0000255" key="1">
    <source>
        <dbReference type="HAMAP-Rule" id="MF_01302"/>
    </source>
</evidence>
<evidence type="ECO:0000305" key="2"/>